<comment type="subunit">
    <text evidence="1">Forms oligomers.</text>
</comment>
<comment type="subcellular location">
    <subcellularLocation>
        <location evidence="1">Cytoplasm</location>
        <location evidence="1">Nucleoid</location>
    </subcellularLocation>
</comment>
<comment type="similarity">
    <text evidence="1">Belongs to the MraZ family.</text>
</comment>
<accession>B8CM47</accession>
<sequence length="152" mass="17293">MFSGASAINLDAKGRIAMPKRHREPLHAHHNSQLVITVDIQSPCLLLYPVQEWQQIAVKLSQLSDTQPAERAIKRMLLGYAHECELDGNGRILLPTPLRQYANLEKRAMLVGQLNKFELWDEAAWQQQIEESRIAILNEDLAANQRLADFSL</sequence>
<dbReference type="EMBL" id="CP000472">
    <property type="protein sequence ID" value="ACJ28971.1"/>
    <property type="molecule type" value="Genomic_DNA"/>
</dbReference>
<dbReference type="RefSeq" id="WP_020912332.1">
    <property type="nucleotide sequence ID" value="NC_011566.1"/>
</dbReference>
<dbReference type="SMR" id="B8CM47"/>
<dbReference type="STRING" id="225849.swp_2221"/>
<dbReference type="KEGG" id="swp:swp_2221"/>
<dbReference type="eggNOG" id="COG2001">
    <property type="taxonomic scope" value="Bacteria"/>
</dbReference>
<dbReference type="HOGENOM" id="CLU_107907_2_0_6"/>
<dbReference type="OrthoDB" id="9807753at2"/>
<dbReference type="Proteomes" id="UP000000753">
    <property type="component" value="Chromosome"/>
</dbReference>
<dbReference type="GO" id="GO:0005737">
    <property type="term" value="C:cytoplasm"/>
    <property type="evidence" value="ECO:0007669"/>
    <property type="project" value="UniProtKB-UniRule"/>
</dbReference>
<dbReference type="GO" id="GO:0009295">
    <property type="term" value="C:nucleoid"/>
    <property type="evidence" value="ECO:0007669"/>
    <property type="project" value="UniProtKB-SubCell"/>
</dbReference>
<dbReference type="GO" id="GO:0003700">
    <property type="term" value="F:DNA-binding transcription factor activity"/>
    <property type="evidence" value="ECO:0007669"/>
    <property type="project" value="UniProtKB-UniRule"/>
</dbReference>
<dbReference type="GO" id="GO:0000976">
    <property type="term" value="F:transcription cis-regulatory region binding"/>
    <property type="evidence" value="ECO:0007669"/>
    <property type="project" value="TreeGrafter"/>
</dbReference>
<dbReference type="GO" id="GO:2000143">
    <property type="term" value="P:negative regulation of DNA-templated transcription initiation"/>
    <property type="evidence" value="ECO:0007669"/>
    <property type="project" value="TreeGrafter"/>
</dbReference>
<dbReference type="CDD" id="cd16321">
    <property type="entry name" value="MraZ_C"/>
    <property type="match status" value="1"/>
</dbReference>
<dbReference type="CDD" id="cd16320">
    <property type="entry name" value="MraZ_N"/>
    <property type="match status" value="1"/>
</dbReference>
<dbReference type="Gene3D" id="3.40.1550.20">
    <property type="entry name" value="Transcriptional regulator MraZ domain"/>
    <property type="match status" value="1"/>
</dbReference>
<dbReference type="HAMAP" id="MF_01008">
    <property type="entry name" value="MraZ"/>
    <property type="match status" value="1"/>
</dbReference>
<dbReference type="InterPro" id="IPR003444">
    <property type="entry name" value="MraZ"/>
</dbReference>
<dbReference type="InterPro" id="IPR035644">
    <property type="entry name" value="MraZ_C"/>
</dbReference>
<dbReference type="InterPro" id="IPR020603">
    <property type="entry name" value="MraZ_dom"/>
</dbReference>
<dbReference type="InterPro" id="IPR035642">
    <property type="entry name" value="MraZ_N"/>
</dbReference>
<dbReference type="InterPro" id="IPR038619">
    <property type="entry name" value="MraZ_sf"/>
</dbReference>
<dbReference type="InterPro" id="IPR007159">
    <property type="entry name" value="SpoVT-AbrB_dom"/>
</dbReference>
<dbReference type="InterPro" id="IPR037914">
    <property type="entry name" value="SpoVT-AbrB_sf"/>
</dbReference>
<dbReference type="NCBIfam" id="TIGR00242">
    <property type="entry name" value="division/cell wall cluster transcriptional repressor MraZ"/>
    <property type="match status" value="1"/>
</dbReference>
<dbReference type="PANTHER" id="PTHR34701">
    <property type="entry name" value="TRANSCRIPTIONAL REGULATOR MRAZ"/>
    <property type="match status" value="1"/>
</dbReference>
<dbReference type="PANTHER" id="PTHR34701:SF1">
    <property type="entry name" value="TRANSCRIPTIONAL REGULATOR MRAZ"/>
    <property type="match status" value="1"/>
</dbReference>
<dbReference type="Pfam" id="PF02381">
    <property type="entry name" value="MraZ"/>
    <property type="match status" value="2"/>
</dbReference>
<dbReference type="SUPFAM" id="SSF89447">
    <property type="entry name" value="AbrB/MazE/MraZ-like"/>
    <property type="match status" value="1"/>
</dbReference>
<dbReference type="PROSITE" id="PS51740">
    <property type="entry name" value="SPOVT_ABRB"/>
    <property type="match status" value="2"/>
</dbReference>
<reference key="1">
    <citation type="journal article" date="2008" name="PLoS ONE">
        <title>Environmental adaptation: genomic analysis of the piezotolerant and psychrotolerant deep-sea iron reducing bacterium Shewanella piezotolerans WP3.</title>
        <authorList>
            <person name="Wang F."/>
            <person name="Wang J."/>
            <person name="Jian H."/>
            <person name="Zhang B."/>
            <person name="Li S."/>
            <person name="Wang F."/>
            <person name="Zeng X."/>
            <person name="Gao L."/>
            <person name="Bartlett D.H."/>
            <person name="Yu J."/>
            <person name="Hu S."/>
            <person name="Xiao X."/>
        </authorList>
    </citation>
    <scope>NUCLEOTIDE SEQUENCE [LARGE SCALE GENOMIC DNA]</scope>
    <source>
        <strain>WP3 / JCM 13877</strain>
    </source>
</reference>
<protein>
    <recommendedName>
        <fullName>Transcriptional regulator MraZ</fullName>
    </recommendedName>
</protein>
<evidence type="ECO:0000255" key="1">
    <source>
        <dbReference type="HAMAP-Rule" id="MF_01008"/>
    </source>
</evidence>
<evidence type="ECO:0000255" key="2">
    <source>
        <dbReference type="PROSITE-ProRule" id="PRU01076"/>
    </source>
</evidence>
<name>MRAZ_SHEPW</name>
<keyword id="KW-0963">Cytoplasm</keyword>
<keyword id="KW-0238">DNA-binding</keyword>
<keyword id="KW-0677">Repeat</keyword>
<keyword id="KW-0804">Transcription</keyword>
<keyword id="KW-0805">Transcription regulation</keyword>
<proteinExistence type="inferred from homology"/>
<organism>
    <name type="scientific">Shewanella piezotolerans (strain WP3 / JCM 13877)</name>
    <dbReference type="NCBI Taxonomy" id="225849"/>
    <lineage>
        <taxon>Bacteria</taxon>
        <taxon>Pseudomonadati</taxon>
        <taxon>Pseudomonadota</taxon>
        <taxon>Gammaproteobacteria</taxon>
        <taxon>Alteromonadales</taxon>
        <taxon>Shewanellaceae</taxon>
        <taxon>Shewanella</taxon>
    </lineage>
</organism>
<feature type="chain" id="PRO_1000191334" description="Transcriptional regulator MraZ">
    <location>
        <begin position="1"/>
        <end position="152"/>
    </location>
</feature>
<feature type="domain" description="SpoVT-AbrB 1" evidence="2">
    <location>
        <begin position="5"/>
        <end position="52"/>
    </location>
</feature>
<feature type="domain" description="SpoVT-AbrB 2" evidence="2">
    <location>
        <begin position="81"/>
        <end position="124"/>
    </location>
</feature>
<gene>
    <name evidence="1" type="primary">mraZ</name>
    <name type="ordered locus">swp_2221</name>
</gene>